<dbReference type="EC" id="3.4.24.-" evidence="1"/>
<dbReference type="EMBL" id="AE014299">
    <property type="protein sequence ID" value="AAN55756.1"/>
    <property type="molecule type" value="Genomic_DNA"/>
</dbReference>
<dbReference type="RefSeq" id="NP_718312.1">
    <property type="nucleotide sequence ID" value="NC_004347.2"/>
</dbReference>
<dbReference type="RefSeq" id="WP_011072672.1">
    <property type="nucleotide sequence ID" value="NC_004347.2"/>
</dbReference>
<dbReference type="STRING" id="211586.SO_2728"/>
<dbReference type="MEROPS" id="M48.002"/>
<dbReference type="PaxDb" id="211586-SO_2728"/>
<dbReference type="KEGG" id="son:SO_2728"/>
<dbReference type="PATRIC" id="fig|211586.12.peg.2629"/>
<dbReference type="eggNOG" id="COG0501">
    <property type="taxonomic scope" value="Bacteria"/>
</dbReference>
<dbReference type="HOGENOM" id="CLU_042266_1_0_6"/>
<dbReference type="OrthoDB" id="15218at2"/>
<dbReference type="PhylomeDB" id="Q8EDL5"/>
<dbReference type="BioCyc" id="SONE211586:G1GMP-2510-MONOMER"/>
<dbReference type="Proteomes" id="UP000008186">
    <property type="component" value="Chromosome"/>
</dbReference>
<dbReference type="GO" id="GO:0005886">
    <property type="term" value="C:plasma membrane"/>
    <property type="evidence" value="ECO:0007669"/>
    <property type="project" value="UniProtKB-SubCell"/>
</dbReference>
<dbReference type="GO" id="GO:0004222">
    <property type="term" value="F:metalloendopeptidase activity"/>
    <property type="evidence" value="ECO:0007669"/>
    <property type="project" value="UniProtKB-UniRule"/>
</dbReference>
<dbReference type="GO" id="GO:0008270">
    <property type="term" value="F:zinc ion binding"/>
    <property type="evidence" value="ECO:0007669"/>
    <property type="project" value="UniProtKB-UniRule"/>
</dbReference>
<dbReference type="GO" id="GO:0006508">
    <property type="term" value="P:proteolysis"/>
    <property type="evidence" value="ECO:0007669"/>
    <property type="project" value="UniProtKB-KW"/>
</dbReference>
<dbReference type="CDD" id="cd07335">
    <property type="entry name" value="M48B_HtpX_like"/>
    <property type="match status" value="1"/>
</dbReference>
<dbReference type="FunFam" id="3.30.2010.10:FF:000001">
    <property type="entry name" value="Protease HtpX"/>
    <property type="match status" value="1"/>
</dbReference>
<dbReference type="Gene3D" id="3.30.2010.10">
    <property type="entry name" value="Metalloproteases ('zincins'), catalytic domain"/>
    <property type="match status" value="1"/>
</dbReference>
<dbReference type="HAMAP" id="MF_00188">
    <property type="entry name" value="Pept_M48_protease_HtpX"/>
    <property type="match status" value="1"/>
</dbReference>
<dbReference type="InterPro" id="IPR050083">
    <property type="entry name" value="HtpX_protease"/>
</dbReference>
<dbReference type="InterPro" id="IPR022919">
    <property type="entry name" value="Pept_M48_protease_HtpX"/>
</dbReference>
<dbReference type="InterPro" id="IPR001915">
    <property type="entry name" value="Peptidase_M48"/>
</dbReference>
<dbReference type="NCBIfam" id="NF003965">
    <property type="entry name" value="PRK05457.1"/>
    <property type="match status" value="1"/>
</dbReference>
<dbReference type="PANTHER" id="PTHR43221">
    <property type="entry name" value="PROTEASE HTPX"/>
    <property type="match status" value="1"/>
</dbReference>
<dbReference type="PANTHER" id="PTHR43221:SF1">
    <property type="entry name" value="PROTEASE HTPX"/>
    <property type="match status" value="1"/>
</dbReference>
<dbReference type="Pfam" id="PF01435">
    <property type="entry name" value="Peptidase_M48"/>
    <property type="match status" value="1"/>
</dbReference>
<reference key="1">
    <citation type="journal article" date="2002" name="Nat. Biotechnol.">
        <title>Genome sequence of the dissimilatory metal ion-reducing bacterium Shewanella oneidensis.</title>
        <authorList>
            <person name="Heidelberg J.F."/>
            <person name="Paulsen I.T."/>
            <person name="Nelson K.E."/>
            <person name="Gaidos E.J."/>
            <person name="Nelson W.C."/>
            <person name="Read T.D."/>
            <person name="Eisen J.A."/>
            <person name="Seshadri R."/>
            <person name="Ward N.L."/>
            <person name="Methe B.A."/>
            <person name="Clayton R.A."/>
            <person name="Meyer T."/>
            <person name="Tsapin A."/>
            <person name="Scott J."/>
            <person name="Beanan M.J."/>
            <person name="Brinkac L.M."/>
            <person name="Daugherty S.C."/>
            <person name="DeBoy R.T."/>
            <person name="Dodson R.J."/>
            <person name="Durkin A.S."/>
            <person name="Haft D.H."/>
            <person name="Kolonay J.F."/>
            <person name="Madupu R."/>
            <person name="Peterson J.D."/>
            <person name="Umayam L.A."/>
            <person name="White O."/>
            <person name="Wolf A.M."/>
            <person name="Vamathevan J.J."/>
            <person name="Weidman J.F."/>
            <person name="Impraim M."/>
            <person name="Lee K."/>
            <person name="Berry K.J."/>
            <person name="Lee C."/>
            <person name="Mueller J."/>
            <person name="Khouri H.M."/>
            <person name="Gill J."/>
            <person name="Utterback T.R."/>
            <person name="McDonald L.A."/>
            <person name="Feldblyum T.V."/>
            <person name="Smith H.O."/>
            <person name="Venter J.C."/>
            <person name="Nealson K.H."/>
            <person name="Fraser C.M."/>
        </authorList>
    </citation>
    <scope>NUCLEOTIDE SEQUENCE [LARGE SCALE GENOMIC DNA]</scope>
    <source>
        <strain>ATCC 700550 / JCM 31522 / CIP 106686 / LMG 19005 / NCIMB 14063 / MR-1</strain>
    </source>
</reference>
<accession>Q8EDL5</accession>
<keyword id="KW-0997">Cell inner membrane</keyword>
<keyword id="KW-1003">Cell membrane</keyword>
<keyword id="KW-0378">Hydrolase</keyword>
<keyword id="KW-0472">Membrane</keyword>
<keyword id="KW-0479">Metal-binding</keyword>
<keyword id="KW-0482">Metalloprotease</keyword>
<keyword id="KW-0645">Protease</keyword>
<keyword id="KW-1185">Reference proteome</keyword>
<keyword id="KW-0812">Transmembrane</keyword>
<keyword id="KW-1133">Transmembrane helix</keyword>
<keyword id="KW-0862">Zinc</keyword>
<evidence type="ECO:0000255" key="1">
    <source>
        <dbReference type="HAMAP-Rule" id="MF_00188"/>
    </source>
</evidence>
<sequence>MKRIFLLIVTNLAVLLVASIVMSILGVNTSTMGGLLVFAAIFGFGGAFISLAISKWMAKKTMGCEVITTPRDSTERWLLDTVARQAQQAGIKMPEVAIYQSPEMNAFATGPSKDNSLVAVSTGLLYGMSQDEIEGVLAHEVSHVANGDMVTLTLIQGVVNTFVIFAARVVAGIINNFVSSNDEEGEGLGMFAYMAVVFVLDMLFGILASIIVAYFSRIREYRADEGAARLAGKNKMIAALERLRQGPESSAMPAQMSAFGINGKRSMAELMMSHPPLEKRIAALQSR</sequence>
<name>HTPX_SHEON</name>
<protein>
    <recommendedName>
        <fullName evidence="1">Protease HtpX</fullName>
        <ecNumber evidence="1">3.4.24.-</ecNumber>
    </recommendedName>
    <alternativeName>
        <fullName evidence="1">Heat shock protein HtpX</fullName>
    </alternativeName>
</protein>
<organism>
    <name type="scientific">Shewanella oneidensis (strain ATCC 700550 / JCM 31522 / CIP 106686 / LMG 19005 / NCIMB 14063 / MR-1)</name>
    <dbReference type="NCBI Taxonomy" id="211586"/>
    <lineage>
        <taxon>Bacteria</taxon>
        <taxon>Pseudomonadati</taxon>
        <taxon>Pseudomonadota</taxon>
        <taxon>Gammaproteobacteria</taxon>
        <taxon>Alteromonadales</taxon>
        <taxon>Shewanellaceae</taxon>
        <taxon>Shewanella</taxon>
    </lineage>
</organism>
<comment type="cofactor">
    <cofactor evidence="1">
        <name>Zn(2+)</name>
        <dbReference type="ChEBI" id="CHEBI:29105"/>
    </cofactor>
    <text evidence="1">Binds 1 zinc ion per subunit.</text>
</comment>
<comment type="subcellular location">
    <subcellularLocation>
        <location evidence="1">Cell inner membrane</location>
        <topology evidence="1">Multi-pass membrane protein</topology>
    </subcellularLocation>
</comment>
<comment type="similarity">
    <text evidence="1">Belongs to the peptidase M48B family.</text>
</comment>
<gene>
    <name evidence="1" type="primary">htpX</name>
    <name type="ordered locus">SO_2728</name>
</gene>
<feature type="chain" id="PRO_0000138888" description="Protease HtpX">
    <location>
        <begin position="1"/>
        <end position="287"/>
    </location>
</feature>
<feature type="transmembrane region" description="Helical" evidence="1">
    <location>
        <begin position="4"/>
        <end position="24"/>
    </location>
</feature>
<feature type="transmembrane region" description="Helical" evidence="1">
    <location>
        <begin position="33"/>
        <end position="53"/>
    </location>
</feature>
<feature type="transmembrane region" description="Helical" evidence="1">
    <location>
        <begin position="154"/>
        <end position="174"/>
    </location>
</feature>
<feature type="transmembrane region" description="Helical" evidence="1">
    <location>
        <begin position="195"/>
        <end position="215"/>
    </location>
</feature>
<feature type="active site" evidence="1">
    <location>
        <position position="140"/>
    </location>
</feature>
<feature type="binding site" evidence="1">
    <location>
        <position position="139"/>
    </location>
    <ligand>
        <name>Zn(2+)</name>
        <dbReference type="ChEBI" id="CHEBI:29105"/>
        <note>catalytic</note>
    </ligand>
</feature>
<feature type="binding site" evidence="1">
    <location>
        <position position="143"/>
    </location>
    <ligand>
        <name>Zn(2+)</name>
        <dbReference type="ChEBI" id="CHEBI:29105"/>
        <note>catalytic</note>
    </ligand>
</feature>
<feature type="binding site" evidence="1">
    <location>
        <position position="220"/>
    </location>
    <ligand>
        <name>Zn(2+)</name>
        <dbReference type="ChEBI" id="CHEBI:29105"/>
        <note>catalytic</note>
    </ligand>
</feature>
<proteinExistence type="inferred from homology"/>